<keyword id="KW-0235">DNA replication</keyword>
<keyword id="KW-0238">DNA-binding</keyword>
<keyword id="KW-1185">Reference proteome</keyword>
<organism>
    <name type="scientific">Thermococcus sibiricus (strain DSM 12597 / MM 739)</name>
    <dbReference type="NCBI Taxonomy" id="604354"/>
    <lineage>
        <taxon>Archaea</taxon>
        <taxon>Methanobacteriati</taxon>
        <taxon>Methanobacteriota</taxon>
        <taxon>Thermococci</taxon>
        <taxon>Thermococcales</taxon>
        <taxon>Thermococcaceae</taxon>
        <taxon>Thermococcus</taxon>
    </lineage>
</organism>
<accession>C6A1Y5</accession>
<feature type="chain" id="PRO_1000205083" description="DNA polymerase sliding clamp">
    <location>
        <begin position="1"/>
        <end position="249"/>
    </location>
</feature>
<evidence type="ECO:0000255" key="1">
    <source>
        <dbReference type="HAMAP-Rule" id="MF_00317"/>
    </source>
</evidence>
<name>PCNA_THESM</name>
<protein>
    <recommendedName>
        <fullName evidence="1">DNA polymerase sliding clamp</fullName>
    </recommendedName>
    <alternativeName>
        <fullName evidence="1">Proliferating cell nuclear antigen homolog</fullName>
        <shortName evidence="1">PCNA</shortName>
    </alternativeName>
</protein>
<sequence>MPFEIVFDGAKEFADLIDTASNLIDEAAFKIAEEGMSMRAMDPSRVVLLDLNLPASIFSKYDIDGEETVGVNMDHFKKVLKRGKGKDILVLRKGEENFLEITLEGTAKRTFRLPLIEVEELELDLPELPFTVRAVILGEVLKEAVKDASLVSDSIKFIAKENEFIMKAEGETQEVEIKLTLEDEGLLDLNVEEETKSAYGVSYLADMAKGIGKADEVVLRFGNEMPLQMDYPIRDEGRLTFLLAPRVEE</sequence>
<reference key="1">
    <citation type="journal article" date="2009" name="Appl. Environ. Microbiol.">
        <title>Metabolic versatility and indigenous origin of the archaeon Thermococcus sibiricus, isolated from a siberian oil reservoir, as revealed by genome analysis.</title>
        <authorList>
            <person name="Mardanov A.V."/>
            <person name="Ravin N.V."/>
            <person name="Svetlitchnyi V.A."/>
            <person name="Beletsky A.V."/>
            <person name="Miroshnichenko M.L."/>
            <person name="Bonch-Osmolovskaya E.A."/>
            <person name="Skryabin K.G."/>
        </authorList>
    </citation>
    <scope>NUCLEOTIDE SEQUENCE [LARGE SCALE GENOMIC DNA]</scope>
    <source>
        <strain>DSM 12597 / MM 739</strain>
    </source>
</reference>
<gene>
    <name evidence="1" type="primary">pcn</name>
    <name type="ordered locus">TSIB_0565</name>
</gene>
<dbReference type="EMBL" id="CP001463">
    <property type="protein sequence ID" value="ACS89630.1"/>
    <property type="molecule type" value="Genomic_DNA"/>
</dbReference>
<dbReference type="RefSeq" id="WP_015848850.1">
    <property type="nucleotide sequence ID" value="NC_012883.1"/>
</dbReference>
<dbReference type="SMR" id="C6A1Y5"/>
<dbReference type="STRING" id="604354.TSIB_0565"/>
<dbReference type="GeneID" id="8095553"/>
<dbReference type="KEGG" id="tsi:TSIB_0565"/>
<dbReference type="eggNOG" id="arCOG00488">
    <property type="taxonomic scope" value="Archaea"/>
</dbReference>
<dbReference type="HOGENOM" id="CLU_043978_1_1_2"/>
<dbReference type="OrthoDB" id="14749at2157"/>
<dbReference type="Proteomes" id="UP000009079">
    <property type="component" value="Chromosome"/>
</dbReference>
<dbReference type="GO" id="GO:0003677">
    <property type="term" value="F:DNA binding"/>
    <property type="evidence" value="ECO:0007669"/>
    <property type="project" value="UniProtKB-UniRule"/>
</dbReference>
<dbReference type="GO" id="GO:0030337">
    <property type="term" value="F:DNA polymerase processivity factor activity"/>
    <property type="evidence" value="ECO:0007669"/>
    <property type="project" value="UniProtKB-UniRule"/>
</dbReference>
<dbReference type="GO" id="GO:0006272">
    <property type="term" value="P:leading strand elongation"/>
    <property type="evidence" value="ECO:0007669"/>
    <property type="project" value="TreeGrafter"/>
</dbReference>
<dbReference type="GO" id="GO:0006275">
    <property type="term" value="P:regulation of DNA replication"/>
    <property type="evidence" value="ECO:0007669"/>
    <property type="project" value="UniProtKB-UniRule"/>
</dbReference>
<dbReference type="CDD" id="cd00577">
    <property type="entry name" value="PCNA"/>
    <property type="match status" value="1"/>
</dbReference>
<dbReference type="FunFam" id="3.70.10.10:FF:000038">
    <property type="entry name" value="DNA polymerase sliding clamp 1"/>
    <property type="match status" value="1"/>
</dbReference>
<dbReference type="Gene3D" id="3.70.10.10">
    <property type="match status" value="1"/>
</dbReference>
<dbReference type="HAMAP" id="MF_00317">
    <property type="entry name" value="DNApol_clamp_arch"/>
    <property type="match status" value="1"/>
</dbReference>
<dbReference type="InterPro" id="IPR046938">
    <property type="entry name" value="DNA_clamp_sf"/>
</dbReference>
<dbReference type="InterPro" id="IPR000730">
    <property type="entry name" value="Pr_cel_nuc_antig"/>
</dbReference>
<dbReference type="InterPro" id="IPR022649">
    <property type="entry name" value="Pr_cel_nuc_antig_C"/>
</dbReference>
<dbReference type="InterPro" id="IPR022659">
    <property type="entry name" value="Pr_cel_nuc_antig_CS"/>
</dbReference>
<dbReference type="InterPro" id="IPR022648">
    <property type="entry name" value="Pr_cel_nuc_antig_N"/>
</dbReference>
<dbReference type="NCBIfam" id="TIGR00590">
    <property type="entry name" value="pcna"/>
    <property type="match status" value="1"/>
</dbReference>
<dbReference type="NCBIfam" id="NF002219">
    <property type="entry name" value="PRK01115.1-2"/>
    <property type="match status" value="1"/>
</dbReference>
<dbReference type="NCBIfam" id="NF002221">
    <property type="entry name" value="PRK01115.1-4"/>
    <property type="match status" value="1"/>
</dbReference>
<dbReference type="PANTHER" id="PTHR11352">
    <property type="entry name" value="PROLIFERATING CELL NUCLEAR ANTIGEN"/>
    <property type="match status" value="1"/>
</dbReference>
<dbReference type="PANTHER" id="PTHR11352:SF0">
    <property type="entry name" value="PROLIFERATING CELL NUCLEAR ANTIGEN"/>
    <property type="match status" value="1"/>
</dbReference>
<dbReference type="Pfam" id="PF02747">
    <property type="entry name" value="PCNA_C"/>
    <property type="match status" value="1"/>
</dbReference>
<dbReference type="Pfam" id="PF00705">
    <property type="entry name" value="PCNA_N"/>
    <property type="match status" value="1"/>
</dbReference>
<dbReference type="PRINTS" id="PR00339">
    <property type="entry name" value="PCNACYCLIN"/>
</dbReference>
<dbReference type="SUPFAM" id="SSF55979">
    <property type="entry name" value="DNA clamp"/>
    <property type="match status" value="2"/>
</dbReference>
<dbReference type="PROSITE" id="PS01251">
    <property type="entry name" value="PCNA_1"/>
    <property type="match status" value="1"/>
</dbReference>
<proteinExistence type="inferred from homology"/>
<comment type="function">
    <text evidence="1">Sliding clamp subunit that acts as a moving platform for DNA processing. Responsible for tethering the catalytic subunit of DNA polymerase and other proteins to DNA during high-speed replication.</text>
</comment>
<comment type="subunit">
    <text evidence="1">Homotrimer. The subunits circularize to form a toroid; DNA passes through its center. Replication factor C (RFC) is required to load the toroid on the DNA.</text>
</comment>
<comment type="similarity">
    <text evidence="1">Belongs to the PCNA family.</text>
</comment>